<comment type="function">
    <text evidence="1">DNA ligase that catalyzes the formation of phosphodiester linkages between 5'-phosphoryl and 3'-hydroxyl groups in double-stranded DNA using NAD as a coenzyme and as the energy source for the reaction. It is essential for DNA replication and repair of damaged DNA.</text>
</comment>
<comment type="catalytic activity">
    <reaction evidence="1">
        <text>NAD(+) + (deoxyribonucleotide)n-3'-hydroxyl + 5'-phospho-(deoxyribonucleotide)m = (deoxyribonucleotide)n+m + AMP + beta-nicotinamide D-nucleotide.</text>
        <dbReference type="EC" id="6.5.1.2"/>
    </reaction>
</comment>
<comment type="cofactor">
    <cofactor evidence="1">
        <name>Mg(2+)</name>
        <dbReference type="ChEBI" id="CHEBI:18420"/>
    </cofactor>
    <cofactor evidence="1">
        <name>Mn(2+)</name>
        <dbReference type="ChEBI" id="CHEBI:29035"/>
    </cofactor>
</comment>
<comment type="similarity">
    <text evidence="1">Belongs to the NAD-dependent DNA ligase family. LigA subfamily.</text>
</comment>
<evidence type="ECO:0000255" key="1">
    <source>
        <dbReference type="HAMAP-Rule" id="MF_01588"/>
    </source>
</evidence>
<organism>
    <name type="scientific">Shewanella frigidimarina (strain NCIMB 400)</name>
    <dbReference type="NCBI Taxonomy" id="318167"/>
    <lineage>
        <taxon>Bacteria</taxon>
        <taxon>Pseudomonadati</taxon>
        <taxon>Pseudomonadota</taxon>
        <taxon>Gammaproteobacteria</taxon>
        <taxon>Alteromonadales</taxon>
        <taxon>Shewanellaceae</taxon>
        <taxon>Shewanella</taxon>
    </lineage>
</organism>
<accession>Q080K9</accession>
<name>DNLJ_SHEFN</name>
<proteinExistence type="inferred from homology"/>
<sequence length="670" mass="73467">MHAIQTEMDQLTHTINQHNIRYYVDDAPSIPDAEYDRLIKRLTELEGDYPQFKSVDSPTQRVGGIALQKFAQITHLKPMLSLDNAFEQADFAAFNKRITDKVDNVDYVCEPKLDGLAVSITYRFGVLERAATRGDGSVGEDITANVRTIRSIPLKLRGEGFPDLVEVRGEVFMPKAAFEVLNQRQISKGDKVFVNPRNAAAGSLRQLDSKITASRALGFYAYALGVVEGESQPMQTSHYGQLTQLQQWGVPVSSEVKVTDSLEKVYAYYADIMARRSALEYEIDGVVIKVNDIAKQQTLGFVAKAPRWAIAYKFPAQEEMTLLESVDFQVGRTGAVTPVARLKPIFVGGVTVSNATLHNADEIARLGVKIGDTVIIRRAGDVIPQIVAIVPEKRPDDAQDIIFPQHCPVCQSIVERLEGEAVARCSGGLFCEAQRKEAIKHFASRKALNIDGMGDKIVEQLIDKELVKTPADLFSLTASSVTMLDRMAMKSATNIVAAIKQAKTTTLARFLYSLGIREVGEATAANLAQHFTEFERIRTASVEQLLEVADVGDIVAKHIRQFFSQPHNIEVIDQLLEAGITWPVIEQADESQLSLKGQTWVLTGTLTQLNRNDAKAQLQALGAKVAGSVSKNTDCLVAGEAAGSKLAKAEELGVKVIDEQALMDLLNAAN</sequence>
<feature type="chain" id="PRO_0000313426" description="DNA ligase">
    <location>
        <begin position="1"/>
        <end position="670"/>
    </location>
</feature>
<feature type="domain" description="BRCT" evidence="1">
    <location>
        <begin position="590"/>
        <end position="670"/>
    </location>
</feature>
<feature type="active site" description="N6-AMP-lysine intermediate" evidence="1">
    <location>
        <position position="112"/>
    </location>
</feature>
<feature type="binding site" evidence="1">
    <location>
        <begin position="32"/>
        <end position="36"/>
    </location>
    <ligand>
        <name>NAD(+)</name>
        <dbReference type="ChEBI" id="CHEBI:57540"/>
    </ligand>
</feature>
<feature type="binding site" evidence="1">
    <location>
        <begin position="81"/>
        <end position="82"/>
    </location>
    <ligand>
        <name>NAD(+)</name>
        <dbReference type="ChEBI" id="CHEBI:57540"/>
    </ligand>
</feature>
<feature type="binding site" evidence="1">
    <location>
        <position position="110"/>
    </location>
    <ligand>
        <name>NAD(+)</name>
        <dbReference type="ChEBI" id="CHEBI:57540"/>
    </ligand>
</feature>
<feature type="binding site" evidence="1">
    <location>
        <position position="133"/>
    </location>
    <ligand>
        <name>NAD(+)</name>
        <dbReference type="ChEBI" id="CHEBI:57540"/>
    </ligand>
</feature>
<feature type="binding site" evidence="1">
    <location>
        <position position="170"/>
    </location>
    <ligand>
        <name>NAD(+)</name>
        <dbReference type="ChEBI" id="CHEBI:57540"/>
    </ligand>
</feature>
<feature type="binding site" evidence="1">
    <location>
        <position position="289"/>
    </location>
    <ligand>
        <name>NAD(+)</name>
        <dbReference type="ChEBI" id="CHEBI:57540"/>
    </ligand>
</feature>
<feature type="binding site" evidence="1">
    <location>
        <position position="313"/>
    </location>
    <ligand>
        <name>NAD(+)</name>
        <dbReference type="ChEBI" id="CHEBI:57540"/>
    </ligand>
</feature>
<feature type="binding site" evidence="1">
    <location>
        <position position="407"/>
    </location>
    <ligand>
        <name>Zn(2+)</name>
        <dbReference type="ChEBI" id="CHEBI:29105"/>
    </ligand>
</feature>
<feature type="binding site" evidence="1">
    <location>
        <position position="410"/>
    </location>
    <ligand>
        <name>Zn(2+)</name>
        <dbReference type="ChEBI" id="CHEBI:29105"/>
    </ligand>
</feature>
<feature type="binding site" evidence="1">
    <location>
        <position position="425"/>
    </location>
    <ligand>
        <name>Zn(2+)</name>
        <dbReference type="ChEBI" id="CHEBI:29105"/>
    </ligand>
</feature>
<feature type="binding site" evidence="1">
    <location>
        <position position="431"/>
    </location>
    <ligand>
        <name>Zn(2+)</name>
        <dbReference type="ChEBI" id="CHEBI:29105"/>
    </ligand>
</feature>
<reference key="1">
    <citation type="submission" date="2006-08" db="EMBL/GenBank/DDBJ databases">
        <title>Complete sequence of Shewanella frigidimarina NCIMB 400.</title>
        <authorList>
            <consortium name="US DOE Joint Genome Institute"/>
            <person name="Copeland A."/>
            <person name="Lucas S."/>
            <person name="Lapidus A."/>
            <person name="Barry K."/>
            <person name="Detter J.C."/>
            <person name="Glavina del Rio T."/>
            <person name="Hammon N."/>
            <person name="Israni S."/>
            <person name="Dalin E."/>
            <person name="Tice H."/>
            <person name="Pitluck S."/>
            <person name="Fredrickson J.K."/>
            <person name="Kolker E."/>
            <person name="McCuel L.A."/>
            <person name="DiChristina T."/>
            <person name="Nealson K.H."/>
            <person name="Newman D."/>
            <person name="Tiedje J.M."/>
            <person name="Zhou J."/>
            <person name="Romine M.F."/>
            <person name="Culley D.E."/>
            <person name="Serres M."/>
            <person name="Chertkov O."/>
            <person name="Brettin T."/>
            <person name="Bruce D."/>
            <person name="Han C."/>
            <person name="Tapia R."/>
            <person name="Gilna P."/>
            <person name="Schmutz J."/>
            <person name="Larimer F."/>
            <person name="Land M."/>
            <person name="Hauser L."/>
            <person name="Kyrpides N."/>
            <person name="Mikhailova N."/>
            <person name="Richardson P."/>
        </authorList>
    </citation>
    <scope>NUCLEOTIDE SEQUENCE [LARGE SCALE GENOMIC DNA]</scope>
    <source>
        <strain>NCIMB 400</strain>
    </source>
</reference>
<protein>
    <recommendedName>
        <fullName evidence="1">DNA ligase</fullName>
        <ecNumber evidence="1">6.5.1.2</ecNumber>
    </recommendedName>
    <alternativeName>
        <fullName evidence="1">Polydeoxyribonucleotide synthase [NAD(+)]</fullName>
    </alternativeName>
</protein>
<keyword id="KW-0227">DNA damage</keyword>
<keyword id="KW-0234">DNA repair</keyword>
<keyword id="KW-0235">DNA replication</keyword>
<keyword id="KW-0436">Ligase</keyword>
<keyword id="KW-0460">Magnesium</keyword>
<keyword id="KW-0464">Manganese</keyword>
<keyword id="KW-0479">Metal-binding</keyword>
<keyword id="KW-0520">NAD</keyword>
<keyword id="KW-1185">Reference proteome</keyword>
<keyword id="KW-0862">Zinc</keyword>
<dbReference type="EC" id="6.5.1.2" evidence="1"/>
<dbReference type="EMBL" id="CP000447">
    <property type="protein sequence ID" value="ABI72306.1"/>
    <property type="molecule type" value="Genomic_DNA"/>
</dbReference>
<dbReference type="RefSeq" id="WP_011637915.1">
    <property type="nucleotide sequence ID" value="NC_008345.1"/>
</dbReference>
<dbReference type="SMR" id="Q080K9"/>
<dbReference type="STRING" id="318167.Sfri_2461"/>
<dbReference type="KEGG" id="sfr:Sfri_2461"/>
<dbReference type="eggNOG" id="COG0272">
    <property type="taxonomic scope" value="Bacteria"/>
</dbReference>
<dbReference type="HOGENOM" id="CLU_007764_2_1_6"/>
<dbReference type="OrthoDB" id="9759736at2"/>
<dbReference type="Proteomes" id="UP000000684">
    <property type="component" value="Chromosome"/>
</dbReference>
<dbReference type="GO" id="GO:0005829">
    <property type="term" value="C:cytosol"/>
    <property type="evidence" value="ECO:0007669"/>
    <property type="project" value="TreeGrafter"/>
</dbReference>
<dbReference type="GO" id="GO:0003911">
    <property type="term" value="F:DNA ligase (NAD+) activity"/>
    <property type="evidence" value="ECO:0007669"/>
    <property type="project" value="UniProtKB-UniRule"/>
</dbReference>
<dbReference type="GO" id="GO:0046872">
    <property type="term" value="F:metal ion binding"/>
    <property type="evidence" value="ECO:0007669"/>
    <property type="project" value="UniProtKB-KW"/>
</dbReference>
<dbReference type="GO" id="GO:0006281">
    <property type="term" value="P:DNA repair"/>
    <property type="evidence" value="ECO:0007669"/>
    <property type="project" value="UniProtKB-KW"/>
</dbReference>
<dbReference type="GO" id="GO:0006260">
    <property type="term" value="P:DNA replication"/>
    <property type="evidence" value="ECO:0007669"/>
    <property type="project" value="UniProtKB-KW"/>
</dbReference>
<dbReference type="CDD" id="cd17748">
    <property type="entry name" value="BRCT_DNA_ligase_like"/>
    <property type="match status" value="1"/>
</dbReference>
<dbReference type="CDD" id="cd00114">
    <property type="entry name" value="LIGANc"/>
    <property type="match status" value="1"/>
</dbReference>
<dbReference type="FunFam" id="1.10.150.20:FF:000006">
    <property type="entry name" value="DNA ligase"/>
    <property type="match status" value="1"/>
</dbReference>
<dbReference type="FunFam" id="1.10.150.20:FF:000007">
    <property type="entry name" value="DNA ligase"/>
    <property type="match status" value="1"/>
</dbReference>
<dbReference type="FunFam" id="1.10.287.610:FF:000002">
    <property type="entry name" value="DNA ligase"/>
    <property type="match status" value="1"/>
</dbReference>
<dbReference type="FunFam" id="2.40.50.140:FF:000012">
    <property type="entry name" value="DNA ligase"/>
    <property type="match status" value="1"/>
</dbReference>
<dbReference type="FunFam" id="3.30.470.30:FF:000001">
    <property type="entry name" value="DNA ligase"/>
    <property type="match status" value="1"/>
</dbReference>
<dbReference type="FunFam" id="6.20.10.30:FF:000001">
    <property type="entry name" value="DNA ligase"/>
    <property type="match status" value="1"/>
</dbReference>
<dbReference type="Gene3D" id="6.20.10.30">
    <property type="match status" value="1"/>
</dbReference>
<dbReference type="Gene3D" id="1.10.150.20">
    <property type="entry name" value="5' to 3' exonuclease, C-terminal subdomain"/>
    <property type="match status" value="2"/>
</dbReference>
<dbReference type="Gene3D" id="3.40.50.10190">
    <property type="entry name" value="BRCT domain"/>
    <property type="match status" value="1"/>
</dbReference>
<dbReference type="Gene3D" id="3.30.470.30">
    <property type="entry name" value="DNA ligase/mRNA capping enzyme"/>
    <property type="match status" value="1"/>
</dbReference>
<dbReference type="Gene3D" id="1.10.287.610">
    <property type="entry name" value="Helix hairpin bin"/>
    <property type="match status" value="1"/>
</dbReference>
<dbReference type="Gene3D" id="2.40.50.140">
    <property type="entry name" value="Nucleic acid-binding proteins"/>
    <property type="match status" value="1"/>
</dbReference>
<dbReference type="HAMAP" id="MF_01588">
    <property type="entry name" value="DNA_ligase_A"/>
    <property type="match status" value="1"/>
</dbReference>
<dbReference type="InterPro" id="IPR001357">
    <property type="entry name" value="BRCT_dom"/>
</dbReference>
<dbReference type="InterPro" id="IPR036420">
    <property type="entry name" value="BRCT_dom_sf"/>
</dbReference>
<dbReference type="InterPro" id="IPR041663">
    <property type="entry name" value="DisA/LigA_HHH"/>
</dbReference>
<dbReference type="InterPro" id="IPR001679">
    <property type="entry name" value="DNA_ligase"/>
</dbReference>
<dbReference type="InterPro" id="IPR018239">
    <property type="entry name" value="DNA_ligase_AS"/>
</dbReference>
<dbReference type="InterPro" id="IPR033136">
    <property type="entry name" value="DNA_ligase_CS"/>
</dbReference>
<dbReference type="InterPro" id="IPR013839">
    <property type="entry name" value="DNAligase_adenylation"/>
</dbReference>
<dbReference type="InterPro" id="IPR013840">
    <property type="entry name" value="DNAligase_N"/>
</dbReference>
<dbReference type="InterPro" id="IPR012340">
    <property type="entry name" value="NA-bd_OB-fold"/>
</dbReference>
<dbReference type="InterPro" id="IPR004150">
    <property type="entry name" value="NAD_DNA_ligase_OB"/>
</dbReference>
<dbReference type="InterPro" id="IPR010994">
    <property type="entry name" value="RuvA_2-like"/>
</dbReference>
<dbReference type="InterPro" id="IPR004149">
    <property type="entry name" value="Znf_DNAligase_C4"/>
</dbReference>
<dbReference type="NCBIfam" id="TIGR00575">
    <property type="entry name" value="dnlj"/>
    <property type="match status" value="1"/>
</dbReference>
<dbReference type="NCBIfam" id="NF005932">
    <property type="entry name" value="PRK07956.1"/>
    <property type="match status" value="1"/>
</dbReference>
<dbReference type="PANTHER" id="PTHR23389">
    <property type="entry name" value="CHROMOSOME TRANSMISSION FIDELITY FACTOR 18"/>
    <property type="match status" value="1"/>
</dbReference>
<dbReference type="PANTHER" id="PTHR23389:SF9">
    <property type="entry name" value="DNA LIGASE"/>
    <property type="match status" value="1"/>
</dbReference>
<dbReference type="Pfam" id="PF00533">
    <property type="entry name" value="BRCT"/>
    <property type="match status" value="1"/>
</dbReference>
<dbReference type="Pfam" id="PF01653">
    <property type="entry name" value="DNA_ligase_aden"/>
    <property type="match status" value="1"/>
</dbReference>
<dbReference type="Pfam" id="PF03120">
    <property type="entry name" value="DNA_ligase_OB"/>
    <property type="match status" value="1"/>
</dbReference>
<dbReference type="Pfam" id="PF03119">
    <property type="entry name" value="DNA_ligase_ZBD"/>
    <property type="match status" value="1"/>
</dbReference>
<dbReference type="Pfam" id="PF12826">
    <property type="entry name" value="HHH_2"/>
    <property type="match status" value="1"/>
</dbReference>
<dbReference type="Pfam" id="PF14520">
    <property type="entry name" value="HHH_5"/>
    <property type="match status" value="1"/>
</dbReference>
<dbReference type="PIRSF" id="PIRSF001604">
    <property type="entry name" value="LigA"/>
    <property type="match status" value="1"/>
</dbReference>
<dbReference type="SMART" id="SM00292">
    <property type="entry name" value="BRCT"/>
    <property type="match status" value="1"/>
</dbReference>
<dbReference type="SMART" id="SM00532">
    <property type="entry name" value="LIGANc"/>
    <property type="match status" value="1"/>
</dbReference>
<dbReference type="SUPFAM" id="SSF52113">
    <property type="entry name" value="BRCT domain"/>
    <property type="match status" value="1"/>
</dbReference>
<dbReference type="SUPFAM" id="SSF56091">
    <property type="entry name" value="DNA ligase/mRNA capping enzyme, catalytic domain"/>
    <property type="match status" value="1"/>
</dbReference>
<dbReference type="SUPFAM" id="SSF50249">
    <property type="entry name" value="Nucleic acid-binding proteins"/>
    <property type="match status" value="1"/>
</dbReference>
<dbReference type="SUPFAM" id="SSF47781">
    <property type="entry name" value="RuvA domain 2-like"/>
    <property type="match status" value="1"/>
</dbReference>
<dbReference type="PROSITE" id="PS50172">
    <property type="entry name" value="BRCT"/>
    <property type="match status" value="1"/>
</dbReference>
<dbReference type="PROSITE" id="PS01055">
    <property type="entry name" value="DNA_LIGASE_N1"/>
    <property type="match status" value="1"/>
</dbReference>
<dbReference type="PROSITE" id="PS01056">
    <property type="entry name" value="DNA_LIGASE_N2"/>
    <property type="match status" value="1"/>
</dbReference>
<gene>
    <name evidence="1" type="primary">ligA</name>
    <name type="ordered locus">Sfri_2461</name>
</gene>